<dbReference type="Proteomes" id="UP001155700">
    <property type="component" value="Unplaced"/>
</dbReference>
<dbReference type="GO" id="GO:0009543">
    <property type="term" value="C:chloroplast thylakoid lumen"/>
    <property type="evidence" value="ECO:0007669"/>
    <property type="project" value="UniProtKB-SubCell"/>
</dbReference>
<organism>
    <name type="scientific">Spinacia oleracea</name>
    <name type="common">Spinach</name>
    <dbReference type="NCBI Taxonomy" id="3562"/>
    <lineage>
        <taxon>Eukaryota</taxon>
        <taxon>Viridiplantae</taxon>
        <taxon>Streptophyta</taxon>
        <taxon>Embryophyta</taxon>
        <taxon>Tracheophyta</taxon>
        <taxon>Spermatophyta</taxon>
        <taxon>Magnoliopsida</taxon>
        <taxon>eudicotyledons</taxon>
        <taxon>Gunneridae</taxon>
        <taxon>Pentapetalae</taxon>
        <taxon>Caryophyllales</taxon>
        <taxon>Chenopodiaceae</taxon>
        <taxon>Chenopodioideae</taxon>
        <taxon>Anserineae</taxon>
        <taxon>Spinacia</taxon>
    </lineage>
</organism>
<keyword id="KW-0150">Chloroplast</keyword>
<keyword id="KW-0903">Direct protein sequencing</keyword>
<keyword id="KW-0934">Plastid</keyword>
<keyword id="KW-1185">Reference proteome</keyword>
<keyword id="KW-0793">Thylakoid</keyword>
<name>TL22_SPIOL</name>
<comment type="subcellular location">
    <subcellularLocation>
        <location>Plastid</location>
        <location>Chloroplast thylakoid lumen</location>
    </subcellularLocation>
</comment>
<accession>P82796</accession>
<reference key="1">
    <citation type="submission" date="2000-09" db="UniProtKB">
        <authorList>
            <person name="Kieselbach T."/>
            <person name="Pettersson U."/>
            <person name="Bystedt M."/>
            <person name="Schroeder W.P."/>
        </authorList>
    </citation>
    <scope>PROTEIN SEQUENCE</scope>
</reference>
<feature type="chain" id="PRO_0000072560" description="Thylakoid lumenal 22 kDa protein">
    <location>
        <begin position="1"/>
        <end position="20" status="greater than"/>
    </location>
</feature>
<feature type="non-terminal residue">
    <location>
        <position position="20"/>
    </location>
</feature>
<sequence>EQSAGFREYIDFFDGYSLTY</sequence>
<proteinExistence type="evidence at protein level"/>
<protein>
    <recommendedName>
        <fullName>Thylakoid lumenal 22 kDa protein</fullName>
    </recommendedName>
    <alternativeName>
        <fullName>P22</fullName>
    </alternativeName>
</protein>